<gene>
    <name evidence="1" type="primary">glgA</name>
    <name type="ordered locus">Pcar_2954</name>
</gene>
<feature type="chain" id="PRO_0000230251" description="Glycogen synthase">
    <location>
        <begin position="1"/>
        <end position="484"/>
    </location>
</feature>
<feature type="binding site" evidence="1">
    <location>
        <position position="15"/>
    </location>
    <ligand>
        <name>ADP-alpha-D-glucose</name>
        <dbReference type="ChEBI" id="CHEBI:57498"/>
    </ligand>
</feature>
<keyword id="KW-0320">Glycogen biosynthesis</keyword>
<keyword id="KW-0328">Glycosyltransferase</keyword>
<keyword id="KW-1185">Reference proteome</keyword>
<keyword id="KW-0808">Transferase</keyword>
<accession>Q3A0B8</accession>
<sequence length="484" mass="53725">MNILLAASEVAPFAKTGGLADVAGALPQELHRLGHDVRIIMPLYRSVRKQHLSLQHLGELPAVKMGDAIRTGRLWQGSLQDVPVYFLEQDDYFDRDGLYGTSQNDYPDNAERFGFFGRGLLAALPQIGFKPEILHLNDWQTGLVPALLRTEWAEDPFYAGTATMTTIHNLGYQGLFPAETVATLGLDPALYTMEGLEYYDQVSFLKSGLVYADMITTVSETYCAEIQTPQMGHGFDGILHARAARLFGVLNGIDDKLWNPQCDPALTAPYSVDDLEGKAANKRQLQKQLGLSCDADVPLLTMVTRLASQKGLDLVEQAWEQLLQRGVQLVILGSGDQDFMDRFAQLGAQHPTQTAVRLGFDDRLARLIYAGSDMFLMPSHYEPCGLGQLIALRYGSVPVVRKTGGLADTVFDPQDQATQANGFTFREISPSAMLAALDRALALYRQPEGWKQLVRRGMQGDFSWRQSALRYVELYRKAVELHHA</sequence>
<dbReference type="EC" id="2.4.1.21" evidence="1"/>
<dbReference type="EMBL" id="CP000142">
    <property type="protein sequence ID" value="ABA90189.1"/>
    <property type="molecule type" value="Genomic_DNA"/>
</dbReference>
<dbReference type="RefSeq" id="WP_011342742.1">
    <property type="nucleotide sequence ID" value="NC_007498.2"/>
</dbReference>
<dbReference type="SMR" id="Q3A0B8"/>
<dbReference type="STRING" id="338963.Pcar_2954"/>
<dbReference type="CAZy" id="GT5">
    <property type="family name" value="Glycosyltransferase Family 5"/>
</dbReference>
<dbReference type="KEGG" id="pca:Pcar_2954"/>
<dbReference type="eggNOG" id="COG0297">
    <property type="taxonomic scope" value="Bacteria"/>
</dbReference>
<dbReference type="HOGENOM" id="CLU_009583_18_2_7"/>
<dbReference type="OrthoDB" id="9808590at2"/>
<dbReference type="UniPathway" id="UPA00164"/>
<dbReference type="Proteomes" id="UP000002534">
    <property type="component" value="Chromosome"/>
</dbReference>
<dbReference type="GO" id="GO:0005829">
    <property type="term" value="C:cytosol"/>
    <property type="evidence" value="ECO:0007669"/>
    <property type="project" value="TreeGrafter"/>
</dbReference>
<dbReference type="GO" id="GO:0009011">
    <property type="term" value="F:alpha-1,4-glucan glucosyltransferase (ADP-glucose donor) activity"/>
    <property type="evidence" value="ECO:0007669"/>
    <property type="project" value="UniProtKB-UniRule"/>
</dbReference>
<dbReference type="GO" id="GO:0004373">
    <property type="term" value="F:alpha-1,4-glucan glucosyltransferase (UDP-glucose donor) activity"/>
    <property type="evidence" value="ECO:0007669"/>
    <property type="project" value="InterPro"/>
</dbReference>
<dbReference type="GO" id="GO:0005978">
    <property type="term" value="P:glycogen biosynthetic process"/>
    <property type="evidence" value="ECO:0007669"/>
    <property type="project" value="UniProtKB-UniRule"/>
</dbReference>
<dbReference type="CDD" id="cd03791">
    <property type="entry name" value="GT5_Glycogen_synthase_DULL1-like"/>
    <property type="match status" value="1"/>
</dbReference>
<dbReference type="Gene3D" id="3.40.50.2000">
    <property type="entry name" value="Glycogen Phosphorylase B"/>
    <property type="match status" value="2"/>
</dbReference>
<dbReference type="HAMAP" id="MF_00484">
    <property type="entry name" value="Glycogen_synth"/>
    <property type="match status" value="1"/>
</dbReference>
<dbReference type="InterPro" id="IPR001296">
    <property type="entry name" value="Glyco_trans_1"/>
</dbReference>
<dbReference type="InterPro" id="IPR011835">
    <property type="entry name" value="GS/SS"/>
</dbReference>
<dbReference type="InterPro" id="IPR013534">
    <property type="entry name" value="Starch_synth_cat_dom"/>
</dbReference>
<dbReference type="NCBIfam" id="TIGR02095">
    <property type="entry name" value="glgA"/>
    <property type="match status" value="1"/>
</dbReference>
<dbReference type="NCBIfam" id="NF001899">
    <property type="entry name" value="PRK00654.1-2"/>
    <property type="match status" value="1"/>
</dbReference>
<dbReference type="PANTHER" id="PTHR45825:SF11">
    <property type="entry name" value="ALPHA AMYLASE DOMAIN-CONTAINING PROTEIN"/>
    <property type="match status" value="1"/>
</dbReference>
<dbReference type="PANTHER" id="PTHR45825">
    <property type="entry name" value="GRANULE-BOUND STARCH SYNTHASE 1, CHLOROPLASTIC/AMYLOPLASTIC"/>
    <property type="match status" value="1"/>
</dbReference>
<dbReference type="Pfam" id="PF08323">
    <property type="entry name" value="Glyco_transf_5"/>
    <property type="match status" value="1"/>
</dbReference>
<dbReference type="Pfam" id="PF00534">
    <property type="entry name" value="Glycos_transf_1"/>
    <property type="match status" value="1"/>
</dbReference>
<dbReference type="SUPFAM" id="SSF53756">
    <property type="entry name" value="UDP-Glycosyltransferase/glycogen phosphorylase"/>
    <property type="match status" value="1"/>
</dbReference>
<comment type="function">
    <text evidence="1">Synthesizes alpha-1,4-glucan chains using ADP-glucose.</text>
</comment>
<comment type="catalytic activity">
    <reaction evidence="1">
        <text>[(1-&gt;4)-alpha-D-glucosyl](n) + ADP-alpha-D-glucose = [(1-&gt;4)-alpha-D-glucosyl](n+1) + ADP + H(+)</text>
        <dbReference type="Rhea" id="RHEA:18189"/>
        <dbReference type="Rhea" id="RHEA-COMP:9584"/>
        <dbReference type="Rhea" id="RHEA-COMP:9587"/>
        <dbReference type="ChEBI" id="CHEBI:15378"/>
        <dbReference type="ChEBI" id="CHEBI:15444"/>
        <dbReference type="ChEBI" id="CHEBI:57498"/>
        <dbReference type="ChEBI" id="CHEBI:456216"/>
        <dbReference type="EC" id="2.4.1.21"/>
    </reaction>
</comment>
<comment type="pathway">
    <text evidence="1">Glycan biosynthesis; glycogen biosynthesis.</text>
</comment>
<comment type="similarity">
    <text evidence="1">Belongs to the glycosyltransferase 1 family. Bacterial/plant glycogen synthase subfamily.</text>
</comment>
<reference key="1">
    <citation type="submission" date="2005-10" db="EMBL/GenBank/DDBJ databases">
        <title>Complete sequence of Pelobacter carbinolicus DSM 2380.</title>
        <authorList>
            <person name="Copeland A."/>
            <person name="Lucas S."/>
            <person name="Lapidus A."/>
            <person name="Barry K."/>
            <person name="Detter J.C."/>
            <person name="Glavina T."/>
            <person name="Hammon N."/>
            <person name="Israni S."/>
            <person name="Pitluck S."/>
            <person name="Chertkov O."/>
            <person name="Schmutz J."/>
            <person name="Larimer F."/>
            <person name="Land M."/>
            <person name="Kyrpides N."/>
            <person name="Ivanova N."/>
            <person name="Richardson P."/>
        </authorList>
    </citation>
    <scope>NUCLEOTIDE SEQUENCE [LARGE SCALE GENOMIC DNA]</scope>
    <source>
        <strain>DSM 2380 / NBRC 103641 / GraBd1</strain>
    </source>
</reference>
<name>GLGA_SYNC1</name>
<proteinExistence type="inferred from homology"/>
<organism>
    <name type="scientific">Syntrophotalea carbinolica (strain DSM 2380 / NBRC 103641 / GraBd1)</name>
    <name type="common">Pelobacter carbinolicus</name>
    <dbReference type="NCBI Taxonomy" id="338963"/>
    <lineage>
        <taxon>Bacteria</taxon>
        <taxon>Pseudomonadati</taxon>
        <taxon>Thermodesulfobacteriota</taxon>
        <taxon>Desulfuromonadia</taxon>
        <taxon>Desulfuromonadales</taxon>
        <taxon>Syntrophotaleaceae</taxon>
        <taxon>Syntrophotalea</taxon>
    </lineage>
</organism>
<evidence type="ECO:0000255" key="1">
    <source>
        <dbReference type="HAMAP-Rule" id="MF_00484"/>
    </source>
</evidence>
<protein>
    <recommendedName>
        <fullName evidence="1">Glycogen synthase</fullName>
        <ecNumber evidence="1">2.4.1.21</ecNumber>
    </recommendedName>
    <alternativeName>
        <fullName evidence="1">Starch [bacterial glycogen] synthase</fullName>
    </alternativeName>
</protein>